<evidence type="ECO:0000255" key="1">
    <source>
        <dbReference type="HAMAP-Rule" id="MF_01363"/>
    </source>
</evidence>
<evidence type="ECO:0000256" key="2">
    <source>
        <dbReference type="SAM" id="MobiDB-lite"/>
    </source>
</evidence>
<evidence type="ECO:0000305" key="3"/>
<name>RL21_STAA2</name>
<protein>
    <recommendedName>
        <fullName evidence="1">Large ribosomal subunit protein bL21</fullName>
    </recommendedName>
    <alternativeName>
        <fullName evidence="3">50S ribosomal protein L21</fullName>
    </alternativeName>
</protein>
<gene>
    <name evidence="1" type="primary">rplU</name>
    <name type="ordered locus">SaurJH1_1737</name>
</gene>
<accession>A6U2B5</accession>
<feature type="chain" id="PRO_1000087003" description="Large ribosomal subunit protein bL21">
    <location>
        <begin position="1"/>
        <end position="102"/>
    </location>
</feature>
<feature type="region of interest" description="Disordered" evidence="2">
    <location>
        <begin position="80"/>
        <end position="102"/>
    </location>
</feature>
<feature type="compositionally biased region" description="Basic residues" evidence="2">
    <location>
        <begin position="80"/>
        <end position="91"/>
    </location>
</feature>
<sequence length="102" mass="11333">MFAIIETGGKQIKVEEGQEIFVEKLDVNEGDTFTFDKVLFVGGDSVKVGAPTVEGATVTATVNKQGRGKKITVFTYKRRKNSKRKKGHRQPYTKLTIDKINA</sequence>
<comment type="function">
    <text evidence="1">This protein binds to 23S rRNA in the presence of protein L20.</text>
</comment>
<comment type="subunit">
    <text evidence="1">Part of the 50S ribosomal subunit. Contacts protein L20.</text>
</comment>
<comment type="similarity">
    <text evidence="1">Belongs to the bacterial ribosomal protein bL21 family.</text>
</comment>
<organism>
    <name type="scientific">Staphylococcus aureus (strain JH1)</name>
    <dbReference type="NCBI Taxonomy" id="359787"/>
    <lineage>
        <taxon>Bacteria</taxon>
        <taxon>Bacillati</taxon>
        <taxon>Bacillota</taxon>
        <taxon>Bacilli</taxon>
        <taxon>Bacillales</taxon>
        <taxon>Staphylococcaceae</taxon>
        <taxon>Staphylococcus</taxon>
    </lineage>
</organism>
<proteinExistence type="inferred from homology"/>
<keyword id="KW-0687">Ribonucleoprotein</keyword>
<keyword id="KW-0689">Ribosomal protein</keyword>
<keyword id="KW-0694">RNA-binding</keyword>
<keyword id="KW-0699">rRNA-binding</keyword>
<dbReference type="EMBL" id="CP000736">
    <property type="protein sequence ID" value="ABR52583.1"/>
    <property type="molecule type" value="Genomic_DNA"/>
</dbReference>
<dbReference type="SMR" id="A6U2B5"/>
<dbReference type="KEGG" id="sah:SaurJH1_1737"/>
<dbReference type="HOGENOM" id="CLU_061463_3_2_9"/>
<dbReference type="GO" id="GO:0005737">
    <property type="term" value="C:cytoplasm"/>
    <property type="evidence" value="ECO:0007669"/>
    <property type="project" value="UniProtKB-ARBA"/>
</dbReference>
<dbReference type="GO" id="GO:1990904">
    <property type="term" value="C:ribonucleoprotein complex"/>
    <property type="evidence" value="ECO:0007669"/>
    <property type="project" value="UniProtKB-KW"/>
</dbReference>
<dbReference type="GO" id="GO:0005840">
    <property type="term" value="C:ribosome"/>
    <property type="evidence" value="ECO:0007669"/>
    <property type="project" value="UniProtKB-KW"/>
</dbReference>
<dbReference type="GO" id="GO:0019843">
    <property type="term" value="F:rRNA binding"/>
    <property type="evidence" value="ECO:0007669"/>
    <property type="project" value="UniProtKB-UniRule"/>
</dbReference>
<dbReference type="GO" id="GO:0003735">
    <property type="term" value="F:structural constituent of ribosome"/>
    <property type="evidence" value="ECO:0007669"/>
    <property type="project" value="InterPro"/>
</dbReference>
<dbReference type="GO" id="GO:0006412">
    <property type="term" value="P:translation"/>
    <property type="evidence" value="ECO:0007669"/>
    <property type="project" value="UniProtKB-UniRule"/>
</dbReference>
<dbReference type="HAMAP" id="MF_01363">
    <property type="entry name" value="Ribosomal_bL21"/>
    <property type="match status" value="1"/>
</dbReference>
<dbReference type="InterPro" id="IPR028909">
    <property type="entry name" value="bL21-like"/>
</dbReference>
<dbReference type="InterPro" id="IPR036164">
    <property type="entry name" value="bL21-like_sf"/>
</dbReference>
<dbReference type="InterPro" id="IPR001787">
    <property type="entry name" value="Ribosomal_bL21"/>
</dbReference>
<dbReference type="NCBIfam" id="TIGR00061">
    <property type="entry name" value="L21"/>
    <property type="match status" value="1"/>
</dbReference>
<dbReference type="PANTHER" id="PTHR21349">
    <property type="entry name" value="50S RIBOSOMAL PROTEIN L21"/>
    <property type="match status" value="1"/>
</dbReference>
<dbReference type="PANTHER" id="PTHR21349:SF0">
    <property type="entry name" value="LARGE RIBOSOMAL SUBUNIT PROTEIN BL21M"/>
    <property type="match status" value="1"/>
</dbReference>
<dbReference type="Pfam" id="PF00829">
    <property type="entry name" value="Ribosomal_L21p"/>
    <property type="match status" value="1"/>
</dbReference>
<dbReference type="SUPFAM" id="SSF141091">
    <property type="entry name" value="L21p-like"/>
    <property type="match status" value="1"/>
</dbReference>
<reference key="1">
    <citation type="submission" date="2007-06" db="EMBL/GenBank/DDBJ databases">
        <title>Complete sequence of chromosome of Staphylococcus aureus subsp. aureus JH1.</title>
        <authorList>
            <consortium name="US DOE Joint Genome Institute"/>
            <person name="Copeland A."/>
            <person name="Lucas S."/>
            <person name="Lapidus A."/>
            <person name="Barry K."/>
            <person name="Detter J.C."/>
            <person name="Glavina del Rio T."/>
            <person name="Hammon N."/>
            <person name="Israni S."/>
            <person name="Dalin E."/>
            <person name="Tice H."/>
            <person name="Pitluck S."/>
            <person name="Chain P."/>
            <person name="Malfatti S."/>
            <person name="Shin M."/>
            <person name="Vergez L."/>
            <person name="Schmutz J."/>
            <person name="Larimer F."/>
            <person name="Land M."/>
            <person name="Hauser L."/>
            <person name="Kyrpides N."/>
            <person name="Ivanova N."/>
            <person name="Tomasz A."/>
            <person name="Richardson P."/>
        </authorList>
    </citation>
    <scope>NUCLEOTIDE SEQUENCE [LARGE SCALE GENOMIC DNA]</scope>
    <source>
        <strain>JH1</strain>
    </source>
</reference>